<protein>
    <recommendedName>
        <fullName evidence="1">Protein translocase subunit SecD</fullName>
    </recommendedName>
</protein>
<gene>
    <name evidence="1" type="primary">secD</name>
    <name type="ordered locus">Tter_0079</name>
</gene>
<comment type="function">
    <text evidence="1">Part of the Sec protein translocase complex. Interacts with the SecYEG preprotein conducting channel. SecDF uses the proton motive force (PMF) to complete protein translocation after the ATP-dependent function of SecA.</text>
</comment>
<comment type="subunit">
    <text evidence="1">Forms a complex with SecF. Part of the essential Sec protein translocation apparatus which comprises SecA, SecYEG and auxiliary proteins SecDF. Other proteins may also be involved.</text>
</comment>
<comment type="subcellular location">
    <subcellularLocation>
        <location evidence="1">Cell membrane</location>
        <topology evidence="1">Multi-pass membrane protein</topology>
    </subcellularLocation>
</comment>
<comment type="similarity">
    <text evidence="1">Belongs to the SecD/SecF family. SecD subfamily.</text>
</comment>
<accession>D1CDJ5</accession>
<reference key="1">
    <citation type="journal article" date="2010" name="Stand. Genomic Sci.">
        <title>Complete genome sequence of 'Thermobaculum terrenum' type strain (YNP1).</title>
        <authorList>
            <person name="Kiss H."/>
            <person name="Cleland D."/>
            <person name="Lapidus A."/>
            <person name="Lucas S."/>
            <person name="Del Rio T.G."/>
            <person name="Nolan M."/>
            <person name="Tice H."/>
            <person name="Han C."/>
            <person name="Goodwin L."/>
            <person name="Pitluck S."/>
            <person name="Liolios K."/>
            <person name="Ivanova N."/>
            <person name="Mavromatis K."/>
            <person name="Ovchinnikova G."/>
            <person name="Pati A."/>
            <person name="Chen A."/>
            <person name="Palaniappan K."/>
            <person name="Land M."/>
            <person name="Hauser L."/>
            <person name="Chang Y.J."/>
            <person name="Jeffries C.D."/>
            <person name="Lu M."/>
            <person name="Brettin T."/>
            <person name="Detter J.C."/>
            <person name="Goeker M."/>
            <person name="Tindall B.J."/>
            <person name="Beck B."/>
            <person name="McDermott T.R."/>
            <person name="Woyke T."/>
            <person name="Bristow J."/>
            <person name="Eisen J.A."/>
            <person name="Markowitz V."/>
            <person name="Hugenholtz P."/>
            <person name="Kyrpides N.C."/>
            <person name="Klenk H.P."/>
            <person name="Cheng J.F."/>
        </authorList>
    </citation>
    <scope>NUCLEOTIDE SEQUENCE [LARGE SCALE GENOMIC DNA]</scope>
    <source>
        <strain>ATCC BAA-798 / CCMEE 7001 / YNP1</strain>
    </source>
</reference>
<keyword id="KW-1003">Cell membrane</keyword>
<keyword id="KW-0472">Membrane</keyword>
<keyword id="KW-0653">Protein transport</keyword>
<keyword id="KW-1185">Reference proteome</keyword>
<keyword id="KW-0811">Translocation</keyword>
<keyword id="KW-0812">Transmembrane</keyword>
<keyword id="KW-1133">Transmembrane helix</keyword>
<keyword id="KW-0813">Transport</keyword>
<sequence length="515" mass="55399">MRRSTLYSLIFIIILTAFAVWVDLPGSRNVFGRQAEVVEGLDLQGGLQVLLQARHVGGKAPTREQMEEVRQVVEQRVNSLGLTEPVVQLQGSDRIVVELPGVKDPEQAIRTFQGTGLLEFIDAGDTPLQVGTLVNTTLGPAITNGNQNQNSTKNGTPTPGTTPTPESTPQANQTPVAANVTPTPEDPQFQQALQATPPEQLQRTYTTVITGNDIANARPDFDPTTGEPVVSFELKPEAAKKFADFTTQNVGKYLAIALDKKIISSPQIRDPITNGRGVITGVTREEARTLAIQIRSGSLSVPLDIISSNTVGATLGNDSVQRSIRAGLIGIGAVALFMILYYRLPGFVSVVALAIYAAVVFALFKLIPVTLTLAGIAGFILSVGMAVDANVLIFARLKDELRRGRGLIQAIDVGFKNAWPSIRDSNISTLITCAILIWFGSRFGASVIKGFAITLAIGVIVSMFTAIFVTRTLLQVVLSMVHTRNLWIWGIGKNQLPEPEGRTLQPAKSSRTTQA</sequence>
<organism>
    <name type="scientific">Thermobaculum terrenum (strain ATCC BAA-798 / CCMEE 7001 / YNP1)</name>
    <dbReference type="NCBI Taxonomy" id="525904"/>
    <lineage>
        <taxon>Bacteria</taxon>
        <taxon>Bacillati</taxon>
        <taxon>Chloroflexota</taxon>
        <taxon>Chloroflexia</taxon>
        <taxon>Candidatus Thermobaculales</taxon>
        <taxon>Candidatus Thermobaculaceae</taxon>
        <taxon>Thermobaculum</taxon>
    </lineage>
</organism>
<feature type="chain" id="PRO_5000538081" description="Protein translocase subunit SecD">
    <location>
        <begin position="1"/>
        <end position="515"/>
    </location>
</feature>
<feature type="transmembrane region" description="Helical" evidence="1">
    <location>
        <begin position="6"/>
        <end position="26"/>
    </location>
</feature>
<feature type="transmembrane region" description="Helical" evidence="1">
    <location>
        <begin position="322"/>
        <end position="342"/>
    </location>
</feature>
<feature type="transmembrane region" description="Helical" evidence="1">
    <location>
        <begin position="344"/>
        <end position="364"/>
    </location>
</feature>
<feature type="transmembrane region" description="Helical" evidence="1">
    <location>
        <begin position="367"/>
        <end position="387"/>
    </location>
</feature>
<feature type="transmembrane region" description="Helical" evidence="1">
    <location>
        <begin position="427"/>
        <end position="447"/>
    </location>
</feature>
<feature type="transmembrane region" description="Helical" evidence="1">
    <location>
        <begin position="450"/>
        <end position="470"/>
    </location>
</feature>
<feature type="region of interest" description="Disordered" evidence="2">
    <location>
        <begin position="141"/>
        <end position="186"/>
    </location>
</feature>
<feature type="compositionally biased region" description="Low complexity" evidence="2">
    <location>
        <begin position="150"/>
        <end position="169"/>
    </location>
</feature>
<feature type="compositionally biased region" description="Polar residues" evidence="2">
    <location>
        <begin position="170"/>
        <end position="186"/>
    </location>
</feature>
<name>SECD_THET1</name>
<dbReference type="EMBL" id="CP001825">
    <property type="protein sequence ID" value="ACZ41001.1"/>
    <property type="molecule type" value="Genomic_DNA"/>
</dbReference>
<dbReference type="RefSeq" id="WP_012874036.1">
    <property type="nucleotide sequence ID" value="NC_013525.1"/>
</dbReference>
<dbReference type="SMR" id="D1CDJ5"/>
<dbReference type="STRING" id="525904.Tter_0079"/>
<dbReference type="KEGG" id="ttr:Tter_0079"/>
<dbReference type="eggNOG" id="COG0342">
    <property type="taxonomic scope" value="Bacteria"/>
</dbReference>
<dbReference type="HOGENOM" id="CLU_007894_4_2_0"/>
<dbReference type="OrthoDB" id="9805019at2"/>
<dbReference type="Proteomes" id="UP000000323">
    <property type="component" value="Chromosome 1"/>
</dbReference>
<dbReference type="GO" id="GO:0005886">
    <property type="term" value="C:plasma membrane"/>
    <property type="evidence" value="ECO:0007669"/>
    <property type="project" value="UniProtKB-SubCell"/>
</dbReference>
<dbReference type="GO" id="GO:0015450">
    <property type="term" value="F:protein-transporting ATPase activity"/>
    <property type="evidence" value="ECO:0007669"/>
    <property type="project" value="InterPro"/>
</dbReference>
<dbReference type="GO" id="GO:0065002">
    <property type="term" value="P:intracellular protein transmembrane transport"/>
    <property type="evidence" value="ECO:0007669"/>
    <property type="project" value="UniProtKB-UniRule"/>
</dbReference>
<dbReference type="GO" id="GO:0006605">
    <property type="term" value="P:protein targeting"/>
    <property type="evidence" value="ECO:0007669"/>
    <property type="project" value="UniProtKB-UniRule"/>
</dbReference>
<dbReference type="GO" id="GO:0043952">
    <property type="term" value="P:protein transport by the Sec complex"/>
    <property type="evidence" value="ECO:0007669"/>
    <property type="project" value="UniProtKB-UniRule"/>
</dbReference>
<dbReference type="FunFam" id="1.20.1640.10:FF:000004">
    <property type="entry name" value="Protein translocase subunit SecD"/>
    <property type="match status" value="1"/>
</dbReference>
<dbReference type="Gene3D" id="3.30.1360.200">
    <property type="match status" value="1"/>
</dbReference>
<dbReference type="Gene3D" id="3.30.70.3400">
    <property type="match status" value="1"/>
</dbReference>
<dbReference type="Gene3D" id="1.20.1640.10">
    <property type="entry name" value="Multidrug efflux transporter AcrB transmembrane domain"/>
    <property type="match status" value="1"/>
</dbReference>
<dbReference type="HAMAP" id="MF_01463_B">
    <property type="entry name" value="SecD_B"/>
    <property type="match status" value="1"/>
</dbReference>
<dbReference type="InterPro" id="IPR001036">
    <property type="entry name" value="Acrflvin-R"/>
</dbReference>
<dbReference type="InterPro" id="IPR005791">
    <property type="entry name" value="SecD"/>
</dbReference>
<dbReference type="InterPro" id="IPR022813">
    <property type="entry name" value="SecD/SecF_arch_bac"/>
</dbReference>
<dbReference type="InterPro" id="IPR048631">
    <property type="entry name" value="SecD_1st"/>
</dbReference>
<dbReference type="InterPro" id="IPR048634">
    <property type="entry name" value="SecD_SecF_C"/>
</dbReference>
<dbReference type="InterPro" id="IPR055344">
    <property type="entry name" value="SecD_SecF_C_bact"/>
</dbReference>
<dbReference type="InterPro" id="IPR054384">
    <property type="entry name" value="SecDF_P1_head"/>
</dbReference>
<dbReference type="NCBIfam" id="TIGR00916">
    <property type="entry name" value="2A0604s01"/>
    <property type="match status" value="1"/>
</dbReference>
<dbReference type="NCBIfam" id="TIGR01129">
    <property type="entry name" value="secD"/>
    <property type="match status" value="1"/>
</dbReference>
<dbReference type="PANTHER" id="PTHR30081:SF1">
    <property type="entry name" value="PROTEIN TRANSLOCASE SUBUNIT SECD"/>
    <property type="match status" value="1"/>
</dbReference>
<dbReference type="PANTHER" id="PTHR30081">
    <property type="entry name" value="PROTEIN-EXPORT MEMBRANE PROTEIN SEC"/>
    <property type="match status" value="1"/>
</dbReference>
<dbReference type="Pfam" id="PF21760">
    <property type="entry name" value="SecD_1st"/>
    <property type="match status" value="1"/>
</dbReference>
<dbReference type="Pfam" id="PF02355">
    <property type="entry name" value="SecD_SecF_C"/>
    <property type="match status" value="1"/>
</dbReference>
<dbReference type="Pfam" id="PF22599">
    <property type="entry name" value="SecDF_P1_head"/>
    <property type="match status" value="1"/>
</dbReference>
<dbReference type="PRINTS" id="PR00702">
    <property type="entry name" value="ACRIFLAVINRP"/>
</dbReference>
<dbReference type="SUPFAM" id="SSF82866">
    <property type="entry name" value="Multidrug efflux transporter AcrB transmembrane domain"/>
    <property type="match status" value="1"/>
</dbReference>
<evidence type="ECO:0000255" key="1">
    <source>
        <dbReference type="HAMAP-Rule" id="MF_01463"/>
    </source>
</evidence>
<evidence type="ECO:0000256" key="2">
    <source>
        <dbReference type="SAM" id="MobiDB-lite"/>
    </source>
</evidence>
<proteinExistence type="inferred from homology"/>